<organism>
    <name type="scientific">Methanococcus vannielii (strain ATCC 35089 / DSM 1224 / JCM 13029 / OCM 148 / SB)</name>
    <dbReference type="NCBI Taxonomy" id="406327"/>
    <lineage>
        <taxon>Archaea</taxon>
        <taxon>Methanobacteriati</taxon>
        <taxon>Methanobacteriota</taxon>
        <taxon>Methanomada group</taxon>
        <taxon>Methanococci</taxon>
        <taxon>Methanococcales</taxon>
        <taxon>Methanococcaceae</taxon>
        <taxon>Methanococcus</taxon>
    </lineage>
</organism>
<evidence type="ECO:0000255" key="1">
    <source>
        <dbReference type="HAMAP-Rule" id="MF_00773"/>
    </source>
</evidence>
<evidence type="ECO:0000305" key="2"/>
<protein>
    <recommendedName>
        <fullName evidence="1">Large ribosomal subunit protein eL24</fullName>
    </recommendedName>
    <alternativeName>
        <fullName evidence="2">50S ribosomal protein L24e</fullName>
    </alternativeName>
</protein>
<keyword id="KW-0479">Metal-binding</keyword>
<keyword id="KW-0687">Ribonucleoprotein</keyword>
<keyword id="KW-0689">Ribosomal protein</keyword>
<keyword id="KW-0694">RNA-binding</keyword>
<keyword id="KW-0699">rRNA-binding</keyword>
<keyword id="KW-0862">Zinc</keyword>
<keyword id="KW-0863">Zinc-finger</keyword>
<name>RL24E_METVS</name>
<proteinExistence type="inferred from homology"/>
<dbReference type="EMBL" id="CP000742">
    <property type="protein sequence ID" value="ABR55447.1"/>
    <property type="molecule type" value="Genomic_DNA"/>
</dbReference>
<dbReference type="RefSeq" id="WP_012066361.1">
    <property type="nucleotide sequence ID" value="NC_009634.1"/>
</dbReference>
<dbReference type="SMR" id="A6USH5"/>
<dbReference type="STRING" id="406327.Mevan_1555"/>
<dbReference type="GeneID" id="5325849"/>
<dbReference type="KEGG" id="mvn:Mevan_1555"/>
<dbReference type="eggNOG" id="arCOG01950">
    <property type="taxonomic scope" value="Archaea"/>
</dbReference>
<dbReference type="HOGENOM" id="CLU_190191_0_0_2"/>
<dbReference type="OrthoDB" id="55506at2157"/>
<dbReference type="Proteomes" id="UP000001107">
    <property type="component" value="Chromosome"/>
</dbReference>
<dbReference type="GO" id="GO:1990904">
    <property type="term" value="C:ribonucleoprotein complex"/>
    <property type="evidence" value="ECO:0007669"/>
    <property type="project" value="UniProtKB-KW"/>
</dbReference>
<dbReference type="GO" id="GO:0005840">
    <property type="term" value="C:ribosome"/>
    <property type="evidence" value="ECO:0007669"/>
    <property type="project" value="UniProtKB-KW"/>
</dbReference>
<dbReference type="GO" id="GO:0019843">
    <property type="term" value="F:rRNA binding"/>
    <property type="evidence" value="ECO:0007669"/>
    <property type="project" value="UniProtKB-UniRule"/>
</dbReference>
<dbReference type="GO" id="GO:0003735">
    <property type="term" value="F:structural constituent of ribosome"/>
    <property type="evidence" value="ECO:0007669"/>
    <property type="project" value="InterPro"/>
</dbReference>
<dbReference type="GO" id="GO:0008270">
    <property type="term" value="F:zinc ion binding"/>
    <property type="evidence" value="ECO:0007669"/>
    <property type="project" value="UniProtKB-UniRule"/>
</dbReference>
<dbReference type="GO" id="GO:0006412">
    <property type="term" value="P:translation"/>
    <property type="evidence" value="ECO:0007669"/>
    <property type="project" value="UniProtKB-UniRule"/>
</dbReference>
<dbReference type="CDD" id="cd00472">
    <property type="entry name" value="Ribosomal_L24e_L24"/>
    <property type="match status" value="1"/>
</dbReference>
<dbReference type="Gene3D" id="2.30.170.20">
    <property type="entry name" value="Ribosomal protein L24e"/>
    <property type="match status" value="1"/>
</dbReference>
<dbReference type="HAMAP" id="MF_00773">
    <property type="entry name" value="Ribosomal_eL24"/>
    <property type="match status" value="1"/>
</dbReference>
<dbReference type="InterPro" id="IPR038630">
    <property type="entry name" value="L24e/L24_sf"/>
</dbReference>
<dbReference type="InterPro" id="IPR056366">
    <property type="entry name" value="Ribosomal_eL24"/>
</dbReference>
<dbReference type="InterPro" id="IPR055345">
    <property type="entry name" value="Ribosomal_eL24-rel_arc"/>
</dbReference>
<dbReference type="InterPro" id="IPR000988">
    <property type="entry name" value="Ribosomal_eL24-rel_N"/>
</dbReference>
<dbReference type="InterPro" id="IPR023442">
    <property type="entry name" value="Ribosomal_eL24_CS"/>
</dbReference>
<dbReference type="InterPro" id="IPR011017">
    <property type="entry name" value="TRASH_dom"/>
</dbReference>
<dbReference type="NCBIfam" id="NF034186">
    <property type="entry name" value="PRK14891.1-1"/>
    <property type="match status" value="1"/>
</dbReference>
<dbReference type="PANTHER" id="PTHR10792">
    <property type="entry name" value="60S RIBOSOMAL PROTEIN L24"/>
    <property type="match status" value="1"/>
</dbReference>
<dbReference type="PANTHER" id="PTHR10792:SF1">
    <property type="entry name" value="RIBOSOMAL PROTEIN L24"/>
    <property type="match status" value="1"/>
</dbReference>
<dbReference type="Pfam" id="PF01246">
    <property type="entry name" value="Ribosomal_L24e"/>
    <property type="match status" value="1"/>
</dbReference>
<dbReference type="SMART" id="SM00746">
    <property type="entry name" value="TRASH"/>
    <property type="match status" value="1"/>
</dbReference>
<dbReference type="SUPFAM" id="SSF57716">
    <property type="entry name" value="Glucocorticoid receptor-like (DNA-binding domain)"/>
    <property type="match status" value="1"/>
</dbReference>
<dbReference type="PROSITE" id="PS01073">
    <property type="entry name" value="RIBOSOMAL_L24E"/>
    <property type="match status" value="1"/>
</dbReference>
<comment type="function">
    <text evidence="1">Binds to the 23S rRNA.</text>
</comment>
<comment type="cofactor">
    <cofactor evidence="1">
        <name>Zn(2+)</name>
        <dbReference type="ChEBI" id="CHEBI:29105"/>
    </cofactor>
    <text evidence="1">Binds 1 zinc ion per subunit.</text>
</comment>
<comment type="subunit">
    <text evidence="1">Part of the 50S ribosomal subunit. Forms a cluster with proteins L3 and L14.</text>
</comment>
<comment type="similarity">
    <text evidence="1">Belongs to the eukaryotic ribosomal protein eL24 family.</text>
</comment>
<sequence>MEWKTCSFCEGKIEPGCGKKYVKKDGSVMQFCSSKCEKNFKLGRVGRKLKWTNMFKRMNKGQ</sequence>
<accession>A6USH5</accession>
<gene>
    <name evidence="1" type="primary">rpl24e</name>
    <name type="ordered locus">Mevan_1555</name>
</gene>
<feature type="chain" id="PRO_1000017357" description="Large ribosomal subunit protein eL24">
    <location>
        <begin position="1"/>
        <end position="62"/>
    </location>
</feature>
<feature type="zinc finger region" description="C4-type" evidence="1">
    <location>
        <begin position="6"/>
        <end position="36"/>
    </location>
</feature>
<feature type="binding site" evidence="1">
    <location>
        <position position="6"/>
    </location>
    <ligand>
        <name>Zn(2+)</name>
        <dbReference type="ChEBI" id="CHEBI:29105"/>
    </ligand>
</feature>
<feature type="binding site" evidence="1">
    <location>
        <position position="9"/>
    </location>
    <ligand>
        <name>Zn(2+)</name>
        <dbReference type="ChEBI" id="CHEBI:29105"/>
    </ligand>
</feature>
<feature type="binding site" evidence="1">
    <location>
        <position position="32"/>
    </location>
    <ligand>
        <name>Zn(2+)</name>
        <dbReference type="ChEBI" id="CHEBI:29105"/>
    </ligand>
</feature>
<feature type="binding site" evidence="1">
    <location>
        <position position="36"/>
    </location>
    <ligand>
        <name>Zn(2+)</name>
        <dbReference type="ChEBI" id="CHEBI:29105"/>
    </ligand>
</feature>
<reference key="1">
    <citation type="submission" date="2007-06" db="EMBL/GenBank/DDBJ databases">
        <title>Complete sequence of Methanococcus vannielii SB.</title>
        <authorList>
            <consortium name="US DOE Joint Genome Institute"/>
            <person name="Copeland A."/>
            <person name="Lucas S."/>
            <person name="Lapidus A."/>
            <person name="Barry K."/>
            <person name="Glavina del Rio T."/>
            <person name="Dalin E."/>
            <person name="Tice H."/>
            <person name="Pitluck S."/>
            <person name="Chain P."/>
            <person name="Malfatti S."/>
            <person name="Shin M."/>
            <person name="Vergez L."/>
            <person name="Schmutz J."/>
            <person name="Larimer F."/>
            <person name="Land M."/>
            <person name="Hauser L."/>
            <person name="Kyrpides N."/>
            <person name="Anderson I."/>
            <person name="Sieprawska-Lupa M."/>
            <person name="Whitman W.B."/>
            <person name="Richardson P."/>
        </authorList>
    </citation>
    <scope>NUCLEOTIDE SEQUENCE [LARGE SCALE GENOMIC DNA]</scope>
    <source>
        <strain>ATCC 35089 / DSM 1224 / JCM 13029 / OCM 148 / SB</strain>
    </source>
</reference>